<geneLocation type="chloroplast"/>
<proteinExistence type="inferred from homology"/>
<reference key="1">
    <citation type="journal article" date="1995" name="Plant Mol. Biol. Rep.">
        <title>The chloroplast genome of a chlorophyll a+c-containing alga, Odontella sinensis.</title>
        <authorList>
            <person name="Kowallik K.V."/>
            <person name="Stoebe B."/>
            <person name="Schaffran I."/>
            <person name="Kroth-Pancic P."/>
            <person name="Freier U."/>
        </authorList>
    </citation>
    <scope>NUCLEOTIDE SEQUENCE [LARGE SCALE GENOMIC DNA]</scope>
</reference>
<sequence length="89" mass="10408">MSTVQFNEMIALPNSEISQAIIQTEKELFQLQFKKATRQPFKPHEIKKAKRRLAQLKTILTSRLDALEKKRGNTVMKLIKKQNYMTGNF</sequence>
<accession>P49562</accession>
<dbReference type="EMBL" id="Z67753">
    <property type="protein sequence ID" value="CAA91640.1"/>
    <property type="molecule type" value="Genomic_DNA"/>
</dbReference>
<dbReference type="PIR" id="S78267">
    <property type="entry name" value="S78267"/>
</dbReference>
<dbReference type="RefSeq" id="NP_043608.1">
    <property type="nucleotide sequence ID" value="NC_001713.1"/>
</dbReference>
<dbReference type="SMR" id="P49562"/>
<dbReference type="GeneID" id="801743"/>
<dbReference type="GO" id="GO:0009507">
    <property type="term" value="C:chloroplast"/>
    <property type="evidence" value="ECO:0007669"/>
    <property type="project" value="UniProtKB-SubCell"/>
</dbReference>
<dbReference type="GO" id="GO:0022625">
    <property type="term" value="C:cytosolic large ribosomal subunit"/>
    <property type="evidence" value="ECO:0007669"/>
    <property type="project" value="TreeGrafter"/>
</dbReference>
<dbReference type="GO" id="GO:0003735">
    <property type="term" value="F:structural constituent of ribosome"/>
    <property type="evidence" value="ECO:0007669"/>
    <property type="project" value="InterPro"/>
</dbReference>
<dbReference type="GO" id="GO:0006412">
    <property type="term" value="P:translation"/>
    <property type="evidence" value="ECO:0007669"/>
    <property type="project" value="UniProtKB-UniRule"/>
</dbReference>
<dbReference type="CDD" id="cd00427">
    <property type="entry name" value="Ribosomal_L29_HIP"/>
    <property type="match status" value="1"/>
</dbReference>
<dbReference type="Gene3D" id="1.10.287.310">
    <property type="match status" value="1"/>
</dbReference>
<dbReference type="HAMAP" id="MF_00374">
    <property type="entry name" value="Ribosomal_uL29"/>
    <property type="match status" value="1"/>
</dbReference>
<dbReference type="InterPro" id="IPR050063">
    <property type="entry name" value="Ribosomal_protein_uL29"/>
</dbReference>
<dbReference type="InterPro" id="IPR001854">
    <property type="entry name" value="Ribosomal_uL29"/>
</dbReference>
<dbReference type="InterPro" id="IPR018254">
    <property type="entry name" value="Ribosomal_uL29_CS"/>
</dbReference>
<dbReference type="InterPro" id="IPR036049">
    <property type="entry name" value="Ribosomal_uL29_sf"/>
</dbReference>
<dbReference type="NCBIfam" id="TIGR00012">
    <property type="entry name" value="L29"/>
    <property type="match status" value="1"/>
</dbReference>
<dbReference type="PANTHER" id="PTHR10916">
    <property type="entry name" value="60S RIBOSOMAL PROTEIN L35/50S RIBOSOMAL PROTEIN L29"/>
    <property type="match status" value="1"/>
</dbReference>
<dbReference type="PANTHER" id="PTHR10916:SF0">
    <property type="entry name" value="LARGE RIBOSOMAL SUBUNIT PROTEIN UL29C"/>
    <property type="match status" value="1"/>
</dbReference>
<dbReference type="Pfam" id="PF00831">
    <property type="entry name" value="Ribosomal_L29"/>
    <property type="match status" value="1"/>
</dbReference>
<dbReference type="SUPFAM" id="SSF46561">
    <property type="entry name" value="Ribosomal protein L29 (L29p)"/>
    <property type="match status" value="1"/>
</dbReference>
<dbReference type="PROSITE" id="PS00579">
    <property type="entry name" value="RIBOSOMAL_L29"/>
    <property type="match status" value="1"/>
</dbReference>
<gene>
    <name type="primary">rpl29</name>
</gene>
<feature type="chain" id="PRO_0000130530" description="Large ribosomal subunit protein uL29c">
    <location>
        <begin position="1"/>
        <end position="89"/>
    </location>
</feature>
<keyword id="KW-0150">Chloroplast</keyword>
<keyword id="KW-0934">Plastid</keyword>
<keyword id="KW-0687">Ribonucleoprotein</keyword>
<keyword id="KW-0689">Ribosomal protein</keyword>
<evidence type="ECO:0000305" key="1"/>
<name>RK29_TRICV</name>
<protein>
    <recommendedName>
        <fullName evidence="1">Large ribosomal subunit protein uL29c</fullName>
    </recommendedName>
    <alternativeName>
        <fullName>50S ribosomal protein L29, chloroplastic</fullName>
    </alternativeName>
</protein>
<organism>
    <name type="scientific">Trieres chinensis</name>
    <name type="common">Marine centric diatom</name>
    <name type="synonym">Odontella sinensis</name>
    <dbReference type="NCBI Taxonomy" id="1514140"/>
    <lineage>
        <taxon>Eukaryota</taxon>
        <taxon>Sar</taxon>
        <taxon>Stramenopiles</taxon>
        <taxon>Ochrophyta</taxon>
        <taxon>Bacillariophyta</taxon>
        <taxon>Mediophyceae</taxon>
        <taxon>Biddulphiophycidae</taxon>
        <taxon>Eupodiscales</taxon>
        <taxon>Parodontellaceae</taxon>
        <taxon>Trieres</taxon>
    </lineage>
</organism>
<comment type="subcellular location">
    <subcellularLocation>
        <location>Plastid</location>
        <location>Chloroplast</location>
    </subcellularLocation>
</comment>
<comment type="similarity">
    <text evidence="1">Belongs to the universal ribosomal protein uL29 family.</text>
</comment>